<protein>
    <recommendedName>
        <fullName>Alpha-crystallin B chain</fullName>
    </recommendedName>
    <alternativeName>
        <fullName>Alpha(B)-crystallin</fullName>
    </alternativeName>
</protein>
<gene>
    <name type="primary">CRYAB</name>
</gene>
<sequence length="52" mass="6010">LIRRPLFSFLTPTRIFDQSFGEHLSESELFPTSGALSPFLLRSPFLRTPSWL</sequence>
<name>CRYAB_TRASE</name>
<organism>
    <name type="scientific">Trachemys scripta elegans</name>
    <name type="common">Red-eared slider turtle</name>
    <name type="synonym">Emys elegans</name>
    <dbReference type="NCBI Taxonomy" id="31138"/>
    <lineage>
        <taxon>Eukaryota</taxon>
        <taxon>Metazoa</taxon>
        <taxon>Chordata</taxon>
        <taxon>Craniata</taxon>
        <taxon>Vertebrata</taxon>
        <taxon>Euteleostomi</taxon>
        <taxon>Archelosauria</taxon>
        <taxon>Testudinata</taxon>
        <taxon>Testudines</taxon>
        <taxon>Cryptodira</taxon>
        <taxon>Durocryptodira</taxon>
        <taxon>Testudinoidea</taxon>
        <taxon>Emydidae</taxon>
        <taxon>Trachemys</taxon>
    </lineage>
</organism>
<comment type="function">
    <text>May contribute to the transparency and refractive index of the lens.</text>
</comment>
<comment type="subunit">
    <text evidence="1">Homodimer. Aggregates with homologous proteins, including alpha-A-crystallin and the small heat shock protein HSPB1, to form large heteromeric complexes (By similarity).</text>
</comment>
<comment type="similarity">
    <text evidence="2">Belongs to the small heat shock protein (HSP20) family.</text>
</comment>
<reference key="1">
    <citation type="journal article" date="1996" name="J. Mol. Evol.">
        <title>Protein sequences indicate that turtles branched off from the amniote tree after mammals.</title>
        <authorList>
            <person name="Caspers G.J."/>
            <person name="Reinders G.J."/>
            <person name="Leunissen J.A.M."/>
            <person name="Wattel J."/>
            <person name="de Jong W.W."/>
        </authorList>
    </citation>
    <scope>NUCLEOTIDE SEQUENCE [MRNA]</scope>
    <source>
        <tissue>Lens</tissue>
    </source>
</reference>
<keyword id="KW-0273">Eye lens protein</keyword>
<feature type="chain" id="PRO_0000125922" description="Alpha-crystallin B chain">
    <location>
        <begin position="1" status="less than"/>
        <end position="52" status="greater than"/>
    </location>
</feature>
<feature type="non-terminal residue">
    <location>
        <position position="1"/>
    </location>
</feature>
<feature type="non-terminal residue">
    <location>
        <position position="52"/>
    </location>
</feature>
<evidence type="ECO:0000250" key="1"/>
<evidence type="ECO:0000255" key="2">
    <source>
        <dbReference type="PROSITE-ProRule" id="PRU00285"/>
    </source>
</evidence>
<accession>Q91518</accession>
<dbReference type="EMBL" id="U31939">
    <property type="protein sequence ID" value="AAB08830.1"/>
    <property type="molecule type" value="mRNA"/>
</dbReference>
<dbReference type="GO" id="GO:0042803">
    <property type="term" value="F:protein homodimerization activity"/>
    <property type="evidence" value="ECO:0000250"/>
    <property type="project" value="UniProtKB"/>
</dbReference>
<dbReference type="GO" id="GO:0005212">
    <property type="term" value="F:structural constituent of eye lens"/>
    <property type="evidence" value="ECO:0007669"/>
    <property type="project" value="UniProtKB-KW"/>
</dbReference>
<dbReference type="InterPro" id="IPR003090">
    <property type="entry name" value="Alpha-crystallin_N"/>
</dbReference>
<dbReference type="Pfam" id="PF00525">
    <property type="entry name" value="Crystallin"/>
    <property type="match status" value="1"/>
</dbReference>
<proteinExistence type="evidence at transcript level"/>